<protein>
    <recommendedName>
        <fullName evidence="1">Large ribosomal subunit protein uL11</fullName>
    </recommendedName>
    <alternativeName>
        <fullName evidence="2">50S ribosomal protein L11</fullName>
    </alternativeName>
</protein>
<keyword id="KW-0488">Methylation</keyword>
<keyword id="KW-1185">Reference proteome</keyword>
<keyword id="KW-0687">Ribonucleoprotein</keyword>
<keyword id="KW-0689">Ribosomal protein</keyword>
<keyword id="KW-0694">RNA-binding</keyword>
<keyword id="KW-0699">rRNA-binding</keyword>
<sequence length="145" mass="15848">MAKKVVATIELMLPAQQASPAPPVGPALGQHGVNIMEFVKQFNAASRDYEPGTILPVVITVYQDRSFTFIMKTPPVSYLLKKAAGVEKGSSDPKRVKVGKITVKQLEEIAKMKMKDMNTRDLKAAMRTVAGTAKSMGIEIEGWKE</sequence>
<comment type="function">
    <text evidence="1">Forms part of the ribosomal stalk which helps the ribosome interact with GTP-bound translation factors.</text>
</comment>
<comment type="subunit">
    <text evidence="1">Part of the ribosomal stalk of the 50S ribosomal subunit. Interacts with L10 and the large rRNA to form the base of the stalk. L10 forms an elongated spine to which L12 dimers bind in a sequential fashion forming a multimeric L10(L12)X complex.</text>
</comment>
<comment type="PTM">
    <text evidence="1">One or more lysine residues are methylated.</text>
</comment>
<comment type="similarity">
    <text evidence="1">Belongs to the universal ribosomal protein uL11 family.</text>
</comment>
<name>RL11_AQUAE</name>
<accession>O67758</accession>
<dbReference type="EMBL" id="AE000657">
    <property type="protein sequence ID" value="AAC07727.1"/>
    <property type="molecule type" value="Genomic_DNA"/>
</dbReference>
<dbReference type="PIR" id="B70466">
    <property type="entry name" value="B70466"/>
</dbReference>
<dbReference type="RefSeq" id="NP_214327.1">
    <property type="nucleotide sequence ID" value="NC_000918.1"/>
</dbReference>
<dbReference type="RefSeq" id="WP_010881263.1">
    <property type="nucleotide sequence ID" value="NC_000918.1"/>
</dbReference>
<dbReference type="SMR" id="O67758"/>
<dbReference type="FunCoup" id="O67758">
    <property type="interactions" value="507"/>
</dbReference>
<dbReference type="STRING" id="224324.aq_1933"/>
<dbReference type="EnsemblBacteria" id="AAC07727">
    <property type="protein sequence ID" value="AAC07727"/>
    <property type="gene ID" value="aq_1933"/>
</dbReference>
<dbReference type="KEGG" id="aae:aq_1933"/>
<dbReference type="PATRIC" id="fig|224324.8.peg.1497"/>
<dbReference type="eggNOG" id="COG0080">
    <property type="taxonomic scope" value="Bacteria"/>
</dbReference>
<dbReference type="HOGENOM" id="CLU_074237_2_0_0"/>
<dbReference type="InParanoid" id="O67758"/>
<dbReference type="OrthoDB" id="9802408at2"/>
<dbReference type="Proteomes" id="UP000000798">
    <property type="component" value="Chromosome"/>
</dbReference>
<dbReference type="GO" id="GO:0022625">
    <property type="term" value="C:cytosolic large ribosomal subunit"/>
    <property type="evidence" value="ECO:0000318"/>
    <property type="project" value="GO_Central"/>
</dbReference>
<dbReference type="GO" id="GO:0070180">
    <property type="term" value="F:large ribosomal subunit rRNA binding"/>
    <property type="evidence" value="ECO:0000318"/>
    <property type="project" value="GO_Central"/>
</dbReference>
<dbReference type="GO" id="GO:0003735">
    <property type="term" value="F:structural constituent of ribosome"/>
    <property type="evidence" value="ECO:0000318"/>
    <property type="project" value="GO_Central"/>
</dbReference>
<dbReference type="GO" id="GO:0006412">
    <property type="term" value="P:translation"/>
    <property type="evidence" value="ECO:0000318"/>
    <property type="project" value="GO_Central"/>
</dbReference>
<dbReference type="CDD" id="cd00349">
    <property type="entry name" value="Ribosomal_L11"/>
    <property type="match status" value="1"/>
</dbReference>
<dbReference type="FunFam" id="1.10.10.250:FF:000001">
    <property type="entry name" value="50S ribosomal protein L11"/>
    <property type="match status" value="1"/>
</dbReference>
<dbReference type="FunFam" id="3.30.1550.10:FF:000005">
    <property type="entry name" value="50S ribosomal protein L11"/>
    <property type="match status" value="1"/>
</dbReference>
<dbReference type="Gene3D" id="1.10.10.250">
    <property type="entry name" value="Ribosomal protein L11, C-terminal domain"/>
    <property type="match status" value="1"/>
</dbReference>
<dbReference type="Gene3D" id="3.30.1550.10">
    <property type="entry name" value="Ribosomal protein L11/L12, N-terminal domain"/>
    <property type="match status" value="1"/>
</dbReference>
<dbReference type="HAMAP" id="MF_00736">
    <property type="entry name" value="Ribosomal_uL11"/>
    <property type="match status" value="1"/>
</dbReference>
<dbReference type="InterPro" id="IPR000911">
    <property type="entry name" value="Ribosomal_uL11"/>
</dbReference>
<dbReference type="InterPro" id="IPR006519">
    <property type="entry name" value="Ribosomal_uL11_bac-typ"/>
</dbReference>
<dbReference type="InterPro" id="IPR020783">
    <property type="entry name" value="Ribosomal_uL11_C"/>
</dbReference>
<dbReference type="InterPro" id="IPR036769">
    <property type="entry name" value="Ribosomal_uL11_C_sf"/>
</dbReference>
<dbReference type="InterPro" id="IPR020785">
    <property type="entry name" value="Ribosomal_uL11_CS"/>
</dbReference>
<dbReference type="InterPro" id="IPR020784">
    <property type="entry name" value="Ribosomal_uL11_N"/>
</dbReference>
<dbReference type="InterPro" id="IPR036796">
    <property type="entry name" value="Ribosomal_uL11_N_sf"/>
</dbReference>
<dbReference type="NCBIfam" id="TIGR01632">
    <property type="entry name" value="L11_bact"/>
    <property type="match status" value="1"/>
</dbReference>
<dbReference type="PANTHER" id="PTHR11661">
    <property type="entry name" value="60S RIBOSOMAL PROTEIN L12"/>
    <property type="match status" value="1"/>
</dbReference>
<dbReference type="PANTHER" id="PTHR11661:SF1">
    <property type="entry name" value="LARGE RIBOSOMAL SUBUNIT PROTEIN UL11M"/>
    <property type="match status" value="1"/>
</dbReference>
<dbReference type="Pfam" id="PF00298">
    <property type="entry name" value="Ribosomal_L11"/>
    <property type="match status" value="1"/>
</dbReference>
<dbReference type="Pfam" id="PF03946">
    <property type="entry name" value="Ribosomal_L11_N"/>
    <property type="match status" value="1"/>
</dbReference>
<dbReference type="SMART" id="SM00649">
    <property type="entry name" value="RL11"/>
    <property type="match status" value="1"/>
</dbReference>
<dbReference type="SUPFAM" id="SSF54747">
    <property type="entry name" value="Ribosomal L11/L12e N-terminal domain"/>
    <property type="match status" value="1"/>
</dbReference>
<dbReference type="SUPFAM" id="SSF46906">
    <property type="entry name" value="Ribosomal protein L11, C-terminal domain"/>
    <property type="match status" value="1"/>
</dbReference>
<dbReference type="PROSITE" id="PS00359">
    <property type="entry name" value="RIBOSOMAL_L11"/>
    <property type="match status" value="1"/>
</dbReference>
<reference key="1">
    <citation type="journal article" date="1998" name="Nature">
        <title>The complete genome of the hyperthermophilic bacterium Aquifex aeolicus.</title>
        <authorList>
            <person name="Deckert G."/>
            <person name="Warren P.V."/>
            <person name="Gaasterland T."/>
            <person name="Young W.G."/>
            <person name="Lenox A.L."/>
            <person name="Graham D.E."/>
            <person name="Overbeek R."/>
            <person name="Snead M.A."/>
            <person name="Keller M."/>
            <person name="Aujay M."/>
            <person name="Huber R."/>
            <person name="Feldman R.A."/>
            <person name="Short J.M."/>
            <person name="Olsen G.J."/>
            <person name="Swanson R.V."/>
        </authorList>
    </citation>
    <scope>NUCLEOTIDE SEQUENCE [LARGE SCALE GENOMIC DNA]</scope>
    <source>
        <strain>VF5</strain>
    </source>
</reference>
<gene>
    <name evidence="1" type="primary">rplK</name>
    <name type="ordered locus">aq_1933</name>
</gene>
<feature type="chain" id="PRO_0000104234" description="Large ribosomal subunit protein uL11">
    <location>
        <begin position="1"/>
        <end position="145"/>
    </location>
</feature>
<organism>
    <name type="scientific">Aquifex aeolicus (strain VF5)</name>
    <dbReference type="NCBI Taxonomy" id="224324"/>
    <lineage>
        <taxon>Bacteria</taxon>
        <taxon>Pseudomonadati</taxon>
        <taxon>Aquificota</taxon>
        <taxon>Aquificia</taxon>
        <taxon>Aquificales</taxon>
        <taxon>Aquificaceae</taxon>
        <taxon>Aquifex</taxon>
    </lineage>
</organism>
<evidence type="ECO:0000255" key="1">
    <source>
        <dbReference type="HAMAP-Rule" id="MF_00736"/>
    </source>
</evidence>
<evidence type="ECO:0000305" key="2"/>
<proteinExistence type="inferred from homology"/>